<evidence type="ECO:0000250" key="1"/>
<evidence type="ECO:0000255" key="2"/>
<evidence type="ECO:0000255" key="3">
    <source>
        <dbReference type="PROSITE-ProRule" id="PRU00658"/>
    </source>
</evidence>
<evidence type="ECO:0000269" key="4">
    <source>
    </source>
</evidence>
<evidence type="ECO:0000269" key="5">
    <source>
    </source>
</evidence>
<evidence type="ECO:0000269" key="6">
    <source>
    </source>
</evidence>
<evidence type="ECO:0000269" key="7">
    <source>
    </source>
</evidence>
<evidence type="ECO:0000269" key="8">
    <source>
    </source>
</evidence>
<evidence type="ECO:0000305" key="9"/>
<evidence type="ECO:0007829" key="10">
    <source>
        <dbReference type="PDB" id="2A6Y"/>
    </source>
</evidence>
<evidence type="ECO:0007829" key="11">
    <source>
        <dbReference type="PDB" id="2A6Z"/>
    </source>
</evidence>
<comment type="function">
    <text evidence="4 7">Involved in the secretion of glycoproteins and in nucleus architecture and gene silencing. Required for the endoplasmic reticulum exit of EMP46.</text>
</comment>
<comment type="subunit">
    <text evidence="5">Homooligomers. Interacts with EMP46 in the endoplasmic reticulum membrane. Interacts with the coatomer proteins COP1, SEC21 and SEC23.</text>
</comment>
<comment type="interaction">
    <interactant intactId="EBI-6439">
        <id>P43555</id>
    </interactant>
    <interactant intactId="EBI-38641">
        <id>Q12396</id>
        <label>EMP46</label>
    </interactant>
    <organismsDiffer>false</organismsDiffer>
    <experiments>4</experiments>
</comment>
<comment type="subcellular location">
    <subcellularLocation>
        <location>Golgi apparatus membrane</location>
        <topology>Single-pass type I membrane protein</topology>
    </subcellularLocation>
    <subcellularLocation>
        <location>Endoplasmic reticulum membrane</location>
        <topology>Single-pass type I membrane protein</topology>
    </subcellularLocation>
</comment>
<comment type="domain">
    <text evidence="1">The di-lysine motif confers endoplasmic reticulum localization for type I membrane proteins.</text>
</comment>
<comment type="miscellaneous">
    <text evidence="6">Present with 2900 molecules/cell in log phase SD medium.</text>
</comment>
<comment type="similarity">
    <text evidence="9">Belongs to the EMP46/EMP47 family.</text>
</comment>
<organism>
    <name type="scientific">Saccharomyces cerevisiae (strain ATCC 204508 / S288c)</name>
    <name type="common">Baker's yeast</name>
    <dbReference type="NCBI Taxonomy" id="559292"/>
    <lineage>
        <taxon>Eukaryota</taxon>
        <taxon>Fungi</taxon>
        <taxon>Dikarya</taxon>
        <taxon>Ascomycota</taxon>
        <taxon>Saccharomycotina</taxon>
        <taxon>Saccharomycetes</taxon>
        <taxon>Saccharomycetales</taxon>
        <taxon>Saccharomycetaceae</taxon>
        <taxon>Saccharomyces</taxon>
    </lineage>
</organism>
<feature type="signal peptide" evidence="8">
    <location>
        <begin position="1"/>
        <end position="28"/>
    </location>
</feature>
<feature type="chain" id="PRO_0000021173" description="Protein EMP47">
    <location>
        <begin position="29"/>
        <end position="445"/>
    </location>
</feature>
<feature type="topological domain" description="Lumenal" evidence="2">
    <location>
        <begin position="29"/>
        <end position="412"/>
    </location>
</feature>
<feature type="transmembrane region" description="Helical" evidence="2">
    <location>
        <begin position="413"/>
        <end position="433"/>
    </location>
</feature>
<feature type="topological domain" description="Cytoplasmic" evidence="2">
    <location>
        <begin position="434"/>
        <end position="445"/>
    </location>
</feature>
<feature type="domain" description="L-type lectin-like" evidence="3">
    <location>
        <begin position="36"/>
        <end position="254"/>
    </location>
</feature>
<feature type="region of interest" description="Mediates the interactions with COPI and COPII coat complexes" evidence="1">
    <location>
        <begin position="430"/>
        <end position="433"/>
    </location>
</feature>
<feature type="short sequence motif" description="Di-lysine motif">
    <location>
        <begin position="441"/>
        <end position="445"/>
    </location>
</feature>
<feature type="disulfide bond">
    <location>
        <begin position="179"/>
        <end position="213"/>
    </location>
</feature>
<feature type="sequence conflict" description="In Ref. 1; CAA60953." evidence="9" ref="1">
    <original>A</original>
    <variation>T</variation>
    <location>
        <position position="52"/>
    </location>
</feature>
<feature type="sequence conflict" description="In Ref. 1; CAA60953." evidence="9" ref="1">
    <original>K</original>
    <variation>N</variation>
    <location>
        <position position="77"/>
    </location>
</feature>
<feature type="sequence conflict" description="In Ref. 1; CAA60953." evidence="9" ref="1">
    <original>V</original>
    <variation>I</variation>
    <location>
        <position position="125"/>
    </location>
</feature>
<feature type="helix" evidence="11">
    <location>
        <begin position="37"/>
        <end position="39"/>
    </location>
</feature>
<feature type="helix" evidence="11">
    <location>
        <begin position="42"/>
        <end position="44"/>
    </location>
</feature>
<feature type="strand" evidence="11">
    <location>
        <begin position="59"/>
        <end position="63"/>
    </location>
</feature>
<feature type="strand" evidence="11">
    <location>
        <begin position="66"/>
        <end position="68"/>
    </location>
</feature>
<feature type="strand" evidence="11">
    <location>
        <begin position="71"/>
        <end position="74"/>
    </location>
</feature>
<feature type="strand" evidence="11">
    <location>
        <begin position="81"/>
        <end position="88"/>
    </location>
</feature>
<feature type="strand" evidence="10">
    <location>
        <begin position="90"/>
        <end position="94"/>
    </location>
</feature>
<feature type="strand" evidence="11">
    <location>
        <begin position="96"/>
        <end position="106"/>
    </location>
</feature>
<feature type="strand" evidence="11">
    <location>
        <begin position="114"/>
        <end position="121"/>
    </location>
</feature>
<feature type="strand" evidence="11">
    <location>
        <begin position="123"/>
        <end position="125"/>
    </location>
</feature>
<feature type="strand" evidence="11">
    <location>
        <begin position="139"/>
        <end position="147"/>
    </location>
</feature>
<feature type="strand" evidence="11">
    <location>
        <begin position="152"/>
        <end position="164"/>
    </location>
</feature>
<feature type="helix" evidence="11">
    <location>
        <begin position="168"/>
        <end position="170"/>
    </location>
</feature>
<feature type="helix" evidence="11">
    <location>
        <begin position="171"/>
        <end position="174"/>
    </location>
</feature>
<feature type="strand" evidence="11">
    <location>
        <begin position="176"/>
        <end position="180"/>
    </location>
</feature>
<feature type="strand" evidence="11">
    <location>
        <begin position="186"/>
        <end position="197"/>
    </location>
</feature>
<feature type="helix" evidence="11">
    <location>
        <begin position="198"/>
        <end position="200"/>
    </location>
</feature>
<feature type="strand" evidence="11">
    <location>
        <begin position="201"/>
        <end position="208"/>
    </location>
</feature>
<feature type="strand" evidence="11">
    <location>
        <begin position="211"/>
        <end position="217"/>
    </location>
</feature>
<feature type="strand" evidence="11">
    <location>
        <begin position="223"/>
        <end position="233"/>
    </location>
</feature>
<feature type="helix" evidence="11">
    <location>
        <begin position="237"/>
        <end position="239"/>
    </location>
</feature>
<feature type="strand" evidence="11">
    <location>
        <begin position="243"/>
        <end position="253"/>
    </location>
</feature>
<keyword id="KW-0002">3D-structure</keyword>
<keyword id="KW-0903">Direct protein sequencing</keyword>
<keyword id="KW-1015">Disulfide bond</keyword>
<keyword id="KW-0256">Endoplasmic reticulum</keyword>
<keyword id="KW-0333">Golgi apparatus</keyword>
<keyword id="KW-0430">Lectin</keyword>
<keyword id="KW-0472">Membrane</keyword>
<keyword id="KW-1185">Reference proteome</keyword>
<keyword id="KW-0732">Signal</keyword>
<keyword id="KW-0812">Transmembrane</keyword>
<keyword id="KW-1133">Transmembrane helix</keyword>
<accession>P43555</accession>
<accession>D6VTI2</accession>
<gene>
    <name type="primary">EMP47</name>
    <name type="ordered locus">YFL048C</name>
</gene>
<reference key="1">
    <citation type="journal article" date="1995" name="J. Cell Biol.">
        <title>The Golgi-localization of yeast Emp47p depends on its di-lysine motif but is not affected by the ret1-1 mutation in alpha-COP.</title>
        <authorList>
            <person name="Schroeder S."/>
            <person name="Schimmoeller F."/>
            <person name="Singer-Krueger B."/>
            <person name="Riezman H."/>
        </authorList>
    </citation>
    <scope>NUCLEOTIDE SEQUENCE [GENOMIC DNA]</scope>
    <scope>SUBCELLULAR LOCATION</scope>
</reference>
<reference key="2">
    <citation type="journal article" date="1995" name="Nat. Genet.">
        <title>Analysis of the nucleotide sequence of chromosome VI from Saccharomyces cerevisiae.</title>
        <authorList>
            <person name="Murakami Y."/>
            <person name="Naitou M."/>
            <person name="Hagiwara H."/>
            <person name="Shibata T."/>
            <person name="Ozawa M."/>
            <person name="Sasanuma S."/>
            <person name="Sasanuma M."/>
            <person name="Tsuchiya Y."/>
            <person name="Soeda E."/>
            <person name="Yokoyama K."/>
            <person name="Yamazaki M."/>
            <person name="Tashiro H."/>
            <person name="Eki T."/>
        </authorList>
    </citation>
    <scope>NUCLEOTIDE SEQUENCE [LARGE SCALE GENOMIC DNA]</scope>
    <source>
        <strain>ATCC 204508 / S288c</strain>
    </source>
</reference>
<reference key="3">
    <citation type="journal article" date="2014" name="G3 (Bethesda)">
        <title>The reference genome sequence of Saccharomyces cerevisiae: Then and now.</title>
        <authorList>
            <person name="Engel S.R."/>
            <person name="Dietrich F.S."/>
            <person name="Fisk D.G."/>
            <person name="Binkley G."/>
            <person name="Balakrishnan R."/>
            <person name="Costanzo M.C."/>
            <person name="Dwight S.S."/>
            <person name="Hitz B.C."/>
            <person name="Karra K."/>
            <person name="Nash R.S."/>
            <person name="Weng S."/>
            <person name="Wong E.D."/>
            <person name="Lloyd P."/>
            <person name="Skrzypek M.S."/>
            <person name="Miyasato S.R."/>
            <person name="Simison M."/>
            <person name="Cherry J.M."/>
        </authorList>
    </citation>
    <scope>GENOME REANNOTATION</scope>
    <source>
        <strain>ATCC 204508 / S288c</strain>
    </source>
</reference>
<reference key="4">
    <citation type="journal article" date="2007" name="Genome Res.">
        <title>Approaching a complete repository of sequence-verified protein-encoding clones for Saccharomyces cerevisiae.</title>
        <authorList>
            <person name="Hu Y."/>
            <person name="Rolfs A."/>
            <person name="Bhullar B."/>
            <person name="Murthy T.V.S."/>
            <person name="Zhu C."/>
            <person name="Berger M.F."/>
            <person name="Camargo A.A."/>
            <person name="Kelley F."/>
            <person name="McCarron S."/>
            <person name="Jepson D."/>
            <person name="Richardson A."/>
            <person name="Raphael J."/>
            <person name="Moreira D."/>
            <person name="Taycher E."/>
            <person name="Zuo D."/>
            <person name="Mohr S."/>
            <person name="Kane M.F."/>
            <person name="Williamson J."/>
            <person name="Simpson A.J.G."/>
            <person name="Bulyk M.L."/>
            <person name="Harlow E."/>
            <person name="Marsischky G."/>
            <person name="Kolodner R.D."/>
            <person name="LaBaer J."/>
        </authorList>
    </citation>
    <scope>NUCLEOTIDE SEQUENCE [GENOMIC DNA]</scope>
    <source>
        <strain>ATCC 204508 / S288c</strain>
    </source>
</reference>
<reference key="5">
    <citation type="journal article" date="1993" name="J. Biol. Chem.">
        <title>Partial purification and characterization of early and late endosomes from yeast. Identification of four novel proteins.</title>
        <authorList>
            <person name="Singer-Krueger B."/>
            <person name="Frank R."/>
            <person name="Crausaz F."/>
            <person name="Riezman H."/>
        </authorList>
    </citation>
    <scope>PROTEIN SEQUENCE OF 29-40</scope>
    <source>
        <strain>RH732</strain>
    </source>
</reference>
<reference key="6">
    <citation type="journal article" date="2002" name="Mol. Biol. Cell">
        <title>Emp47p and its close homolog Emp46p have a tyrosine-containing endoplasmic reticulum exit signal and function in glycoprotein secretion in Saccharomyces cerevisiae.</title>
        <authorList>
            <person name="Sato K."/>
            <person name="Nakano A."/>
        </authorList>
    </citation>
    <scope>FUNCTION</scope>
    <scope>DOMAINS</scope>
</reference>
<reference key="7">
    <citation type="journal article" date="2003" name="Mol. Biol. Cell">
        <title>Oligomerization of a cargo receptor directs protein sorting into COPII-coated transport vesicles.</title>
        <authorList>
            <person name="Sato K."/>
            <person name="Nakano A."/>
        </authorList>
    </citation>
    <scope>INTERACTION WITH EMP46</scope>
    <scope>SUBUNIT</scope>
    <scope>SUBCELLULAR LOCATION</scope>
</reference>
<reference key="8">
    <citation type="journal article" date="2003" name="Nature">
        <title>Global analysis of protein expression in yeast.</title>
        <authorList>
            <person name="Ghaemmaghami S."/>
            <person name="Huh W.-K."/>
            <person name="Bower K."/>
            <person name="Howson R.W."/>
            <person name="Belle A."/>
            <person name="Dephoure N."/>
            <person name="O'Shea E.K."/>
            <person name="Weissman J.S."/>
        </authorList>
    </citation>
    <scope>LEVEL OF PROTEIN EXPRESSION [LARGE SCALE ANALYSIS]</scope>
</reference>
<reference key="9">
    <citation type="journal article" date="2004" name="J. Biol. Chem.">
        <title>Reconstitution of coat protein complex II (COPII) vesicle formation from cargo-reconstituted proteoliposomes reveals the potential role of GTP hydrolysis by Sar1p in protein sorting.</title>
        <authorList>
            <person name="Sato K."/>
            <person name="Nakano A."/>
        </authorList>
    </citation>
    <scope>FUNCTION</scope>
</reference>
<reference key="10">
    <citation type="journal article" date="2006" name="J. Biol. Chem.">
        <title>Structures of the carbohydrate recognition domain of Ca2+-independent cargo receptors Emp46p and Emp47p.</title>
        <authorList>
            <person name="Satoh T."/>
            <person name="Sato K."/>
            <person name="Kanoh A."/>
            <person name="Yamashita K."/>
            <person name="Yamada Y."/>
            <person name="Igarashi N."/>
            <person name="Kato R."/>
            <person name="Nakano A."/>
            <person name="Wakatsuki S."/>
        </authorList>
    </citation>
    <scope>X-RAY CRYSTALLOGRAPHY (1 ANGSTROMS) OF 29-282</scope>
</reference>
<sequence>MMMLITMKSTVLLSVFTVLATWAGLLEAHPLGDTSDASKLSSDYSLPDLINARKVPNNWQTGEQASLEEGRIVLTSKQNSKGSLWLKQGFDLKDSFTMEWTFRSVGYSGQTDGGISFWFVQDSNVPRDKQLYNGPVNYDGLQLLVDNNGPLGPTLRGQLNDGQKPVDKTKIYDQSFASCLMGYQDSSVPSTIRVTYDLEDDNLLKVQVDNKVCFQTRKVRFPSGSYRIGVTAQNGAVNNNAESFEIFKMQFFNGVIEDSLIPNVNAMGQPKLITKYIDQQTGKEKLIEKTAFDADKDKITNYELYKKLDRVEGKILANDINALETKLNDVIKVQQELLSFMTTITKQLSSKPPANNEKGTSTDDAIAEDKENFKDFLSINQKLEKVLVEQEKYREATKRHGQDGPQVDEIARKLMIWLLPLIFIMLVMAYYTFRIRQEIIKTKLL</sequence>
<dbReference type="EMBL" id="X87622">
    <property type="protein sequence ID" value="CAA60953.1"/>
    <property type="molecule type" value="Genomic_DNA"/>
</dbReference>
<dbReference type="EMBL" id="D50617">
    <property type="protein sequence ID" value="BAA09193.1"/>
    <property type="molecule type" value="Genomic_DNA"/>
</dbReference>
<dbReference type="EMBL" id="AY693033">
    <property type="protein sequence ID" value="AAT93052.1"/>
    <property type="molecule type" value="Genomic_DNA"/>
</dbReference>
<dbReference type="EMBL" id="BK006940">
    <property type="protein sequence ID" value="DAA12392.1"/>
    <property type="molecule type" value="Genomic_DNA"/>
</dbReference>
<dbReference type="PIR" id="S56207">
    <property type="entry name" value="S56207"/>
</dbReference>
<dbReference type="RefSeq" id="NP_116606.1">
    <property type="nucleotide sequence ID" value="NM_001179919.1"/>
</dbReference>
<dbReference type="PDB" id="2A6Y">
    <property type="method" value="X-ray"/>
    <property type="resolution" value="1.42 A"/>
    <property type="chains" value="A=29-282"/>
</dbReference>
<dbReference type="PDB" id="2A6Z">
    <property type="method" value="X-ray"/>
    <property type="resolution" value="1.00 A"/>
    <property type="chains" value="A=35-255"/>
</dbReference>
<dbReference type="PDB" id="2A70">
    <property type="method" value="X-ray"/>
    <property type="resolution" value="1.10 A"/>
    <property type="chains" value="A/B=35-255"/>
</dbReference>
<dbReference type="PDB" id="2A71">
    <property type="method" value="X-ray"/>
    <property type="resolution" value="2.70 A"/>
    <property type="chains" value="A/B/C/D=35-255"/>
</dbReference>
<dbReference type="PDBsum" id="2A6Y"/>
<dbReference type="PDBsum" id="2A6Z"/>
<dbReference type="PDBsum" id="2A70"/>
<dbReference type="PDBsum" id="2A71"/>
<dbReference type="SMR" id="P43555"/>
<dbReference type="BioGRID" id="31099">
    <property type="interactions" value="142"/>
</dbReference>
<dbReference type="DIP" id="DIP-7675N"/>
<dbReference type="ELM" id="P43555"/>
<dbReference type="FunCoup" id="P43555">
    <property type="interactions" value="190"/>
</dbReference>
<dbReference type="IntAct" id="P43555">
    <property type="interactions" value="91"/>
</dbReference>
<dbReference type="MINT" id="P43555"/>
<dbReference type="STRING" id="4932.YFL048C"/>
<dbReference type="UniLectin" id="P43555"/>
<dbReference type="PaxDb" id="4932-YFL048C"/>
<dbReference type="PeptideAtlas" id="P43555"/>
<dbReference type="EnsemblFungi" id="YFL048C_mRNA">
    <property type="protein sequence ID" value="YFL048C"/>
    <property type="gene ID" value="YFL048C"/>
</dbReference>
<dbReference type="GeneID" id="850496"/>
<dbReference type="KEGG" id="sce:YFL048C"/>
<dbReference type="AGR" id="SGD:S000001846"/>
<dbReference type="SGD" id="S000001846">
    <property type="gene designation" value="EMP47"/>
</dbReference>
<dbReference type="VEuPathDB" id="FungiDB:YFL048C"/>
<dbReference type="eggNOG" id="ENOG502QR1C">
    <property type="taxonomic scope" value="Eukaryota"/>
</dbReference>
<dbReference type="GeneTree" id="ENSGT00940000176827"/>
<dbReference type="HOGENOM" id="CLU_050572_0_0_1"/>
<dbReference type="InParanoid" id="P43555"/>
<dbReference type="OMA" id="VMAYYTF"/>
<dbReference type="OrthoDB" id="10265193at2759"/>
<dbReference type="BioCyc" id="YEAST:G3O-30417-MONOMER"/>
<dbReference type="Reactome" id="R-SCE-9013106">
    <property type="pathway name" value="RHOC GTPase cycle"/>
</dbReference>
<dbReference type="BioGRID-ORCS" id="850496">
    <property type="hits" value="9 hits in 10 CRISPR screens"/>
</dbReference>
<dbReference type="EvolutionaryTrace" id="P43555"/>
<dbReference type="PRO" id="PR:P43555"/>
<dbReference type="Proteomes" id="UP000002311">
    <property type="component" value="Chromosome VI"/>
</dbReference>
<dbReference type="RNAct" id="P43555">
    <property type="molecule type" value="protein"/>
</dbReference>
<dbReference type="GO" id="GO:0030134">
    <property type="term" value="C:COPII-coated ER to Golgi transport vesicle"/>
    <property type="evidence" value="ECO:0000314"/>
    <property type="project" value="SGD"/>
</dbReference>
<dbReference type="GO" id="GO:0005789">
    <property type="term" value="C:endoplasmic reticulum membrane"/>
    <property type="evidence" value="ECO:0000314"/>
    <property type="project" value="SGD"/>
</dbReference>
<dbReference type="GO" id="GO:0005793">
    <property type="term" value="C:endoplasmic reticulum-Golgi intermediate compartment"/>
    <property type="evidence" value="ECO:0000318"/>
    <property type="project" value="GO_Central"/>
</dbReference>
<dbReference type="GO" id="GO:0000329">
    <property type="term" value="C:fungal-type vacuole membrane"/>
    <property type="evidence" value="ECO:0007005"/>
    <property type="project" value="SGD"/>
</dbReference>
<dbReference type="GO" id="GO:0000139">
    <property type="term" value="C:Golgi membrane"/>
    <property type="evidence" value="ECO:0000314"/>
    <property type="project" value="SGD"/>
</dbReference>
<dbReference type="GO" id="GO:0097367">
    <property type="term" value="F:carbohydrate derivative binding"/>
    <property type="evidence" value="ECO:0000314"/>
    <property type="project" value="SGD"/>
</dbReference>
<dbReference type="GO" id="GO:0005537">
    <property type="term" value="F:D-mannose binding"/>
    <property type="evidence" value="ECO:0000318"/>
    <property type="project" value="GO_Central"/>
</dbReference>
<dbReference type="GO" id="GO:0006888">
    <property type="term" value="P:endoplasmic reticulum to Golgi vesicle-mediated transport"/>
    <property type="evidence" value="ECO:0000316"/>
    <property type="project" value="SGD"/>
</dbReference>
<dbReference type="CDD" id="cd06903">
    <property type="entry name" value="lectin_EMP46_EMP47"/>
    <property type="match status" value="1"/>
</dbReference>
<dbReference type="Gene3D" id="2.60.120.200">
    <property type="match status" value="1"/>
</dbReference>
<dbReference type="InterPro" id="IPR013320">
    <property type="entry name" value="ConA-like_dom_sf"/>
</dbReference>
<dbReference type="InterPro" id="IPR016710">
    <property type="entry name" value="Emp46/Emp47"/>
</dbReference>
<dbReference type="InterPro" id="IPR035661">
    <property type="entry name" value="EMP46/EMP47_N"/>
</dbReference>
<dbReference type="InterPro" id="IPR051136">
    <property type="entry name" value="Intracellular_Lectin-GPT"/>
</dbReference>
<dbReference type="InterPro" id="IPR005052">
    <property type="entry name" value="Lectin_leg"/>
</dbReference>
<dbReference type="PANTHER" id="PTHR12223:SF28">
    <property type="entry name" value="LECTIN, MANNOSE BINDING 1 LIKE"/>
    <property type="match status" value="1"/>
</dbReference>
<dbReference type="PANTHER" id="PTHR12223">
    <property type="entry name" value="VESICULAR MANNOSE-BINDING LECTIN"/>
    <property type="match status" value="1"/>
</dbReference>
<dbReference type="Pfam" id="PF03388">
    <property type="entry name" value="Lectin_leg-like"/>
    <property type="match status" value="1"/>
</dbReference>
<dbReference type="PIRSF" id="PIRSF018136">
    <property type="entry name" value="L-type_lectin_fungi"/>
    <property type="match status" value="1"/>
</dbReference>
<dbReference type="SUPFAM" id="SSF49899">
    <property type="entry name" value="Concanavalin A-like lectins/glucanases"/>
    <property type="match status" value="1"/>
</dbReference>
<dbReference type="PROSITE" id="PS51328">
    <property type="entry name" value="L_LECTIN_LIKE"/>
    <property type="match status" value="1"/>
</dbReference>
<protein>
    <recommendedName>
        <fullName>Protein EMP47</fullName>
    </recommendedName>
    <alternativeName>
        <fullName>47 kDa endomembrane protein</fullName>
    </alternativeName>
    <alternativeName>
        <fullName>Endosomal P44 protein</fullName>
    </alternativeName>
</protein>
<name>EMP47_YEAST</name>
<proteinExistence type="evidence at protein level"/>